<feature type="chain" id="PRO_1000126260" description="Transaldolase">
    <location>
        <begin position="1"/>
        <end position="322"/>
    </location>
</feature>
<feature type="active site" description="Schiff-base intermediate with substrate" evidence="2">
    <location>
        <position position="136"/>
    </location>
</feature>
<dbReference type="EC" id="2.2.1.2" evidence="2"/>
<dbReference type="EMBL" id="CP000967">
    <property type="protein sequence ID" value="ACD57821.1"/>
    <property type="molecule type" value="Genomic_DNA"/>
</dbReference>
<dbReference type="RefSeq" id="WP_012444266.1">
    <property type="nucleotide sequence ID" value="NC_010717.2"/>
</dbReference>
<dbReference type="SMR" id="B2SQJ4"/>
<dbReference type="KEGG" id="xop:PXO_04593"/>
<dbReference type="eggNOG" id="COG0176">
    <property type="taxonomic scope" value="Bacteria"/>
</dbReference>
<dbReference type="HOGENOM" id="CLU_047470_0_1_6"/>
<dbReference type="UniPathway" id="UPA00115">
    <property type="reaction ID" value="UER00414"/>
</dbReference>
<dbReference type="Proteomes" id="UP000001740">
    <property type="component" value="Chromosome"/>
</dbReference>
<dbReference type="GO" id="GO:0005829">
    <property type="term" value="C:cytosol"/>
    <property type="evidence" value="ECO:0007669"/>
    <property type="project" value="TreeGrafter"/>
</dbReference>
<dbReference type="GO" id="GO:0004801">
    <property type="term" value="F:transaldolase activity"/>
    <property type="evidence" value="ECO:0000250"/>
    <property type="project" value="UniProtKB"/>
</dbReference>
<dbReference type="GO" id="GO:0005975">
    <property type="term" value="P:carbohydrate metabolic process"/>
    <property type="evidence" value="ECO:0007669"/>
    <property type="project" value="InterPro"/>
</dbReference>
<dbReference type="GO" id="GO:0006098">
    <property type="term" value="P:pentose-phosphate shunt"/>
    <property type="evidence" value="ECO:0007669"/>
    <property type="project" value="UniProtKB-UniRule"/>
</dbReference>
<dbReference type="CDD" id="cd00957">
    <property type="entry name" value="Transaldolase_TalAB"/>
    <property type="match status" value="1"/>
</dbReference>
<dbReference type="FunFam" id="3.20.20.70:FF:000226">
    <property type="entry name" value="Transaldolase"/>
    <property type="match status" value="1"/>
</dbReference>
<dbReference type="Gene3D" id="3.20.20.70">
    <property type="entry name" value="Aldolase class I"/>
    <property type="match status" value="1"/>
</dbReference>
<dbReference type="HAMAP" id="MF_00492">
    <property type="entry name" value="Transaldolase_1"/>
    <property type="match status" value="1"/>
</dbReference>
<dbReference type="InterPro" id="IPR013785">
    <property type="entry name" value="Aldolase_TIM"/>
</dbReference>
<dbReference type="InterPro" id="IPR001585">
    <property type="entry name" value="TAL/FSA"/>
</dbReference>
<dbReference type="InterPro" id="IPR004730">
    <property type="entry name" value="Transaldolase_1"/>
</dbReference>
<dbReference type="InterPro" id="IPR018225">
    <property type="entry name" value="Transaldolase_AS"/>
</dbReference>
<dbReference type="PANTHER" id="PTHR10683">
    <property type="entry name" value="TRANSALDOLASE"/>
    <property type="match status" value="1"/>
</dbReference>
<dbReference type="PANTHER" id="PTHR10683:SF18">
    <property type="entry name" value="TRANSALDOLASE"/>
    <property type="match status" value="1"/>
</dbReference>
<dbReference type="Pfam" id="PF00923">
    <property type="entry name" value="TAL_FSA"/>
    <property type="match status" value="1"/>
</dbReference>
<dbReference type="SUPFAM" id="SSF51569">
    <property type="entry name" value="Aldolase"/>
    <property type="match status" value="1"/>
</dbReference>
<dbReference type="PROSITE" id="PS01054">
    <property type="entry name" value="TRANSALDOLASE_1"/>
    <property type="match status" value="1"/>
</dbReference>
<dbReference type="PROSITE" id="PS00958">
    <property type="entry name" value="TRANSALDOLASE_2"/>
    <property type="match status" value="1"/>
</dbReference>
<evidence type="ECO:0000250" key="1"/>
<evidence type="ECO:0000255" key="2">
    <source>
        <dbReference type="HAMAP-Rule" id="MF_00492"/>
    </source>
</evidence>
<organism>
    <name type="scientific">Xanthomonas oryzae pv. oryzae (strain PXO99A)</name>
    <dbReference type="NCBI Taxonomy" id="360094"/>
    <lineage>
        <taxon>Bacteria</taxon>
        <taxon>Pseudomonadati</taxon>
        <taxon>Pseudomonadota</taxon>
        <taxon>Gammaproteobacteria</taxon>
        <taxon>Lysobacterales</taxon>
        <taxon>Lysobacteraceae</taxon>
        <taxon>Xanthomonas</taxon>
    </lineage>
</organism>
<proteinExistence type="inferred from homology"/>
<protein>
    <recommendedName>
        <fullName evidence="2">Transaldolase</fullName>
        <ecNumber evidence="2">2.2.1.2</ecNumber>
    </recommendedName>
</protein>
<sequence>MTASPSKLAQLRELSVVVADTGDYDAIKRLQPVDCTTNPTLVKKALDLPVYADLLERELAWGRAHGGDDRTTTVDEVADRLTIGVGVKLSALVPGRVSTEVDADLAHDTQATIAKARKFVAMYAERGVPKDKILIKIAATWEGIEAARQLQLEGIDCNLTLIFNRAQALACAEANVFLISPFVGRILDYYVAQGQTPASIDEDPGVVFVRTVYNAFKQRGSSTVVMGASFRSTAQIEALAGCDRLTISPDLLEKLDAEHGELPRKLSPGNANNAQITPIDSDSFASGLAADPMATEKLASGIDTFAKDLHALRKTIADKLAG</sequence>
<reference key="1">
    <citation type="journal article" date="2008" name="BMC Genomics">
        <title>Genome sequence and rapid evolution of the rice pathogen Xanthomonas oryzae pv. oryzae PXO99A.</title>
        <authorList>
            <person name="Salzberg S.L."/>
            <person name="Sommer D.D."/>
            <person name="Schatz M.C."/>
            <person name="Phillippy A.M."/>
            <person name="Rabinowicz P.D."/>
            <person name="Tsuge S."/>
            <person name="Furutani A."/>
            <person name="Ochiai H."/>
            <person name="Delcher A.L."/>
            <person name="Kelley D."/>
            <person name="Madupu R."/>
            <person name="Puiu D."/>
            <person name="Radune D."/>
            <person name="Shumway M."/>
            <person name="Trapnell C."/>
            <person name="Aparna G."/>
            <person name="Jha G."/>
            <person name="Pandey A."/>
            <person name="Patil P.B."/>
            <person name="Ishihara H."/>
            <person name="Meyer D.F."/>
            <person name="Szurek B."/>
            <person name="Verdier V."/>
            <person name="Koebnik R."/>
            <person name="Dow J.M."/>
            <person name="Ryan R.P."/>
            <person name="Hirata H."/>
            <person name="Tsuyumu S."/>
            <person name="Won Lee S."/>
            <person name="Seo Y.-S."/>
            <person name="Sriariyanum M."/>
            <person name="Ronald P.C."/>
            <person name="Sonti R.V."/>
            <person name="Van Sluys M.-A."/>
            <person name="Leach J.E."/>
            <person name="White F.F."/>
            <person name="Bogdanove A.J."/>
        </authorList>
    </citation>
    <scope>NUCLEOTIDE SEQUENCE [LARGE SCALE GENOMIC DNA]</scope>
    <source>
        <strain>PXO99A</strain>
    </source>
</reference>
<gene>
    <name evidence="2" type="primary">tal</name>
    <name type="ordered locus">PXO_04593</name>
</gene>
<name>TAL_XANOP</name>
<keyword id="KW-0963">Cytoplasm</keyword>
<keyword id="KW-0570">Pentose shunt</keyword>
<keyword id="KW-0704">Schiff base</keyword>
<keyword id="KW-0808">Transferase</keyword>
<accession>B2SQJ4</accession>
<comment type="function">
    <text evidence="2">Transaldolase is important for the balance of metabolites in the pentose-phosphate pathway.</text>
</comment>
<comment type="catalytic activity">
    <reaction evidence="2">
        <text>D-sedoheptulose 7-phosphate + D-glyceraldehyde 3-phosphate = D-erythrose 4-phosphate + beta-D-fructose 6-phosphate</text>
        <dbReference type="Rhea" id="RHEA:17053"/>
        <dbReference type="ChEBI" id="CHEBI:16897"/>
        <dbReference type="ChEBI" id="CHEBI:57483"/>
        <dbReference type="ChEBI" id="CHEBI:57634"/>
        <dbReference type="ChEBI" id="CHEBI:59776"/>
        <dbReference type="EC" id="2.2.1.2"/>
    </reaction>
</comment>
<comment type="pathway">
    <text evidence="2">Carbohydrate degradation; pentose phosphate pathway; D-glyceraldehyde 3-phosphate and beta-D-fructose 6-phosphate from D-ribose 5-phosphate and D-xylulose 5-phosphate (non-oxidative stage): step 2/3.</text>
</comment>
<comment type="subunit">
    <text evidence="1">Homodimer.</text>
</comment>
<comment type="subcellular location">
    <subcellularLocation>
        <location evidence="2">Cytoplasm</location>
    </subcellularLocation>
</comment>
<comment type="similarity">
    <text evidence="2">Belongs to the transaldolase family. Type 1 subfamily.</text>
</comment>